<organism>
    <name type="scientific">Alteromonas mediterranea (strain DSM 17117 / CIP 110805 / LMG 28347 / Deep ecotype)</name>
    <dbReference type="NCBI Taxonomy" id="1774373"/>
    <lineage>
        <taxon>Bacteria</taxon>
        <taxon>Pseudomonadati</taxon>
        <taxon>Pseudomonadota</taxon>
        <taxon>Gammaproteobacteria</taxon>
        <taxon>Alteromonadales</taxon>
        <taxon>Alteromonadaceae</taxon>
        <taxon>Alteromonas/Salinimonas group</taxon>
        <taxon>Alteromonas</taxon>
    </lineage>
</organism>
<gene>
    <name evidence="1" type="primary">rpmI</name>
    <name type="ordered locus">MADE_1008090</name>
</gene>
<comment type="similarity">
    <text evidence="1">Belongs to the bacterial ribosomal protein bL35 family.</text>
</comment>
<protein>
    <recommendedName>
        <fullName evidence="1">Large ribosomal subunit protein bL35</fullName>
    </recommendedName>
    <alternativeName>
        <fullName evidence="3">50S ribosomal protein L35</fullName>
    </alternativeName>
</protein>
<proteinExistence type="inferred from homology"/>
<accession>B4RSL6</accession>
<accession>F2G8I9</accession>
<name>RL35_ALTMD</name>
<keyword id="KW-0687">Ribonucleoprotein</keyword>
<keyword id="KW-0689">Ribosomal protein</keyword>
<sequence length="65" mass="7559">MPKMKTVSGAAKRFKKTGSGRFKSKQSHLRHILTKKSSKRKRHLRGKKLVHDSDTKLVQRMLPYV</sequence>
<dbReference type="EMBL" id="CP001103">
    <property type="protein sequence ID" value="AEA97758.1"/>
    <property type="molecule type" value="Genomic_DNA"/>
</dbReference>
<dbReference type="RefSeq" id="WP_012518091.1">
    <property type="nucleotide sequence ID" value="NC_011138.3"/>
</dbReference>
<dbReference type="SMR" id="B4RSL6"/>
<dbReference type="GeneID" id="83257747"/>
<dbReference type="KEGG" id="amc:MADE_1008090"/>
<dbReference type="HOGENOM" id="CLU_169643_1_1_6"/>
<dbReference type="Proteomes" id="UP000001870">
    <property type="component" value="Chromosome"/>
</dbReference>
<dbReference type="GO" id="GO:0022625">
    <property type="term" value="C:cytosolic large ribosomal subunit"/>
    <property type="evidence" value="ECO:0007669"/>
    <property type="project" value="TreeGrafter"/>
</dbReference>
<dbReference type="GO" id="GO:0003735">
    <property type="term" value="F:structural constituent of ribosome"/>
    <property type="evidence" value="ECO:0007669"/>
    <property type="project" value="InterPro"/>
</dbReference>
<dbReference type="GO" id="GO:0006412">
    <property type="term" value="P:translation"/>
    <property type="evidence" value="ECO:0007669"/>
    <property type="project" value="UniProtKB-UniRule"/>
</dbReference>
<dbReference type="FunFam" id="4.10.410.60:FF:000001">
    <property type="entry name" value="50S ribosomal protein L35"/>
    <property type="match status" value="1"/>
</dbReference>
<dbReference type="Gene3D" id="4.10.410.60">
    <property type="match status" value="1"/>
</dbReference>
<dbReference type="HAMAP" id="MF_00514">
    <property type="entry name" value="Ribosomal_bL35"/>
    <property type="match status" value="1"/>
</dbReference>
<dbReference type="InterPro" id="IPR001706">
    <property type="entry name" value="Ribosomal_bL35"/>
</dbReference>
<dbReference type="InterPro" id="IPR021137">
    <property type="entry name" value="Ribosomal_bL35-like"/>
</dbReference>
<dbReference type="InterPro" id="IPR018265">
    <property type="entry name" value="Ribosomal_bL35_CS"/>
</dbReference>
<dbReference type="InterPro" id="IPR037229">
    <property type="entry name" value="Ribosomal_bL35_sf"/>
</dbReference>
<dbReference type="NCBIfam" id="TIGR00001">
    <property type="entry name" value="rpmI_bact"/>
    <property type="match status" value="1"/>
</dbReference>
<dbReference type="PANTHER" id="PTHR33343">
    <property type="entry name" value="54S RIBOSOMAL PROTEIN BL35M"/>
    <property type="match status" value="1"/>
</dbReference>
<dbReference type="PANTHER" id="PTHR33343:SF1">
    <property type="entry name" value="LARGE RIBOSOMAL SUBUNIT PROTEIN BL35M"/>
    <property type="match status" value="1"/>
</dbReference>
<dbReference type="Pfam" id="PF01632">
    <property type="entry name" value="Ribosomal_L35p"/>
    <property type="match status" value="1"/>
</dbReference>
<dbReference type="PRINTS" id="PR00064">
    <property type="entry name" value="RIBOSOMALL35"/>
</dbReference>
<dbReference type="SUPFAM" id="SSF143034">
    <property type="entry name" value="L35p-like"/>
    <property type="match status" value="1"/>
</dbReference>
<dbReference type="PROSITE" id="PS00936">
    <property type="entry name" value="RIBOSOMAL_L35"/>
    <property type="match status" value="1"/>
</dbReference>
<feature type="chain" id="PRO_1000127300" description="Large ribosomal subunit protein bL35">
    <location>
        <begin position="1"/>
        <end position="65"/>
    </location>
</feature>
<feature type="region of interest" description="Disordered" evidence="2">
    <location>
        <begin position="1"/>
        <end position="30"/>
    </location>
</feature>
<feature type="compositionally biased region" description="Basic residues" evidence="2">
    <location>
        <begin position="12"/>
        <end position="30"/>
    </location>
</feature>
<reference key="1">
    <citation type="journal article" date="2008" name="ISME J.">
        <title>Comparative genomics of two ecotypes of the marine planktonic copiotroph Alteromonas macleodii suggests alternative lifestyles associated with different kinds of particulate organic matter.</title>
        <authorList>
            <person name="Ivars-Martinez E."/>
            <person name="Martin-Cuadrado A.-B."/>
            <person name="D'Auria G."/>
            <person name="Mira A."/>
            <person name="Ferriera S."/>
            <person name="Johnson J."/>
            <person name="Friedman R."/>
            <person name="Rodriguez-Valera F."/>
        </authorList>
    </citation>
    <scope>NUCLEOTIDE SEQUENCE [LARGE SCALE GENOMIC DNA]</scope>
    <source>
        <strain>DSM 17117 / CIP 110805 / LMG 28347 / Deep ecotype</strain>
    </source>
</reference>
<evidence type="ECO:0000255" key="1">
    <source>
        <dbReference type="HAMAP-Rule" id="MF_00514"/>
    </source>
</evidence>
<evidence type="ECO:0000256" key="2">
    <source>
        <dbReference type="SAM" id="MobiDB-lite"/>
    </source>
</evidence>
<evidence type="ECO:0000305" key="3"/>